<name>SRB8_KLULA</name>
<feature type="chain" id="PRO_0000312973" description="Mediator of RNA polymerase II transcription subunit 12">
    <location>
        <begin position="1"/>
        <end position="1322"/>
    </location>
</feature>
<feature type="region of interest" description="Disordered" evidence="2">
    <location>
        <begin position="1"/>
        <end position="21"/>
    </location>
</feature>
<keyword id="KW-0010">Activator</keyword>
<keyword id="KW-0539">Nucleus</keyword>
<keyword id="KW-1185">Reference proteome</keyword>
<keyword id="KW-0678">Repressor</keyword>
<keyword id="KW-0804">Transcription</keyword>
<keyword id="KW-0805">Transcription regulation</keyword>
<evidence type="ECO:0000250" key="1"/>
<evidence type="ECO:0000256" key="2">
    <source>
        <dbReference type="SAM" id="MobiDB-lite"/>
    </source>
</evidence>
<evidence type="ECO:0000305" key="3"/>
<reference key="1">
    <citation type="journal article" date="2004" name="Nature">
        <title>Genome evolution in yeasts.</title>
        <authorList>
            <person name="Dujon B."/>
            <person name="Sherman D."/>
            <person name="Fischer G."/>
            <person name="Durrens P."/>
            <person name="Casaregola S."/>
            <person name="Lafontaine I."/>
            <person name="de Montigny J."/>
            <person name="Marck C."/>
            <person name="Neuveglise C."/>
            <person name="Talla E."/>
            <person name="Goffard N."/>
            <person name="Frangeul L."/>
            <person name="Aigle M."/>
            <person name="Anthouard V."/>
            <person name="Babour A."/>
            <person name="Barbe V."/>
            <person name="Barnay S."/>
            <person name="Blanchin S."/>
            <person name="Beckerich J.-M."/>
            <person name="Beyne E."/>
            <person name="Bleykasten C."/>
            <person name="Boisrame A."/>
            <person name="Boyer J."/>
            <person name="Cattolico L."/>
            <person name="Confanioleri F."/>
            <person name="de Daruvar A."/>
            <person name="Despons L."/>
            <person name="Fabre E."/>
            <person name="Fairhead C."/>
            <person name="Ferry-Dumazet H."/>
            <person name="Groppi A."/>
            <person name="Hantraye F."/>
            <person name="Hennequin C."/>
            <person name="Jauniaux N."/>
            <person name="Joyet P."/>
            <person name="Kachouri R."/>
            <person name="Kerrest A."/>
            <person name="Koszul R."/>
            <person name="Lemaire M."/>
            <person name="Lesur I."/>
            <person name="Ma L."/>
            <person name="Muller H."/>
            <person name="Nicaud J.-M."/>
            <person name="Nikolski M."/>
            <person name="Oztas S."/>
            <person name="Ozier-Kalogeropoulos O."/>
            <person name="Pellenz S."/>
            <person name="Potier S."/>
            <person name="Richard G.-F."/>
            <person name="Straub M.-L."/>
            <person name="Suleau A."/>
            <person name="Swennen D."/>
            <person name="Tekaia F."/>
            <person name="Wesolowski-Louvel M."/>
            <person name="Westhof E."/>
            <person name="Wirth B."/>
            <person name="Zeniou-Meyer M."/>
            <person name="Zivanovic Y."/>
            <person name="Bolotin-Fukuhara M."/>
            <person name="Thierry A."/>
            <person name="Bouchier C."/>
            <person name="Caudron B."/>
            <person name="Scarpelli C."/>
            <person name="Gaillardin C."/>
            <person name="Weissenbach J."/>
            <person name="Wincker P."/>
            <person name="Souciet J.-L."/>
        </authorList>
    </citation>
    <scope>NUCLEOTIDE SEQUENCE [LARGE SCALE GENOMIC DNA]</scope>
    <source>
        <strain>ATCC 8585 / CBS 2359 / DSM 70799 / NBRC 1267 / NRRL Y-1140 / WM37</strain>
    </source>
</reference>
<protein>
    <recommendedName>
        <fullName>Mediator of RNA polymerase II transcription subunit 12</fullName>
    </recommendedName>
    <alternativeName>
        <fullName>Mediator complex subunit 12</fullName>
    </alternativeName>
</protein>
<dbReference type="EMBL" id="CR382126">
    <property type="protein sequence ID" value="CAG98102.1"/>
    <property type="molecule type" value="Genomic_DNA"/>
</dbReference>
<dbReference type="RefSeq" id="XP_455394.1">
    <property type="nucleotide sequence ID" value="XM_455394.1"/>
</dbReference>
<dbReference type="SMR" id="Q6CKZ5"/>
<dbReference type="FunCoup" id="Q6CKZ5">
    <property type="interactions" value="168"/>
</dbReference>
<dbReference type="STRING" id="284590.Q6CKZ5"/>
<dbReference type="PaxDb" id="284590-Q6CKZ5"/>
<dbReference type="KEGG" id="kla:KLLA0_F06919g"/>
<dbReference type="eggNOG" id="KOG4522">
    <property type="taxonomic scope" value="Eukaryota"/>
</dbReference>
<dbReference type="HOGENOM" id="CLU_256280_0_0_1"/>
<dbReference type="InParanoid" id="Q6CKZ5"/>
<dbReference type="OMA" id="EFIVYHQ"/>
<dbReference type="Proteomes" id="UP000000598">
    <property type="component" value="Chromosome F"/>
</dbReference>
<dbReference type="GO" id="GO:0016592">
    <property type="term" value="C:mediator complex"/>
    <property type="evidence" value="ECO:0007669"/>
    <property type="project" value="InterPro"/>
</dbReference>
<dbReference type="GO" id="GO:0003712">
    <property type="term" value="F:transcription coregulator activity"/>
    <property type="evidence" value="ECO:0007669"/>
    <property type="project" value="InterPro"/>
</dbReference>
<dbReference type="GO" id="GO:0006357">
    <property type="term" value="P:regulation of transcription by RNA polymerase II"/>
    <property type="evidence" value="ECO:0007669"/>
    <property type="project" value="InterPro"/>
</dbReference>
<dbReference type="InterPro" id="IPR019035">
    <property type="entry name" value="Mediator_Med12"/>
</dbReference>
<dbReference type="PANTHER" id="PTHR46567">
    <property type="entry name" value="MEDIATOR OF RNA POLYMERASE II TRANSCRIPTION SUBUNIT 12"/>
    <property type="match status" value="1"/>
</dbReference>
<dbReference type="PANTHER" id="PTHR46567:SF1">
    <property type="entry name" value="MEDIATOR OF RNA POLYMERASE II TRANSCRIPTION SUBUNIT 12"/>
    <property type="match status" value="1"/>
</dbReference>
<dbReference type="Pfam" id="PF09497">
    <property type="entry name" value="Med12"/>
    <property type="match status" value="1"/>
</dbReference>
<dbReference type="SMART" id="SM01281">
    <property type="entry name" value="Med12"/>
    <property type="match status" value="1"/>
</dbReference>
<sequence>MSPSKYLLTPPEELHPLTDSNPQIYPDFDPWIHTKEEDKILKEFVAKGYYTASRVNFETISARSALQGSLPKVSSLLGDELSKIIEIREQEINRISTLDIEDSTRFTKWSGQDFHLPNRVTLTDQKRNLWLQELSSSNTSLRKLTKSVPHGFRKRHILEQCYTQFVPIYRVIWLIKSCYAIEWKGMISKAKGETTHEELLSTLYKDWTDNMVLILEKLVFEVSKYYNDPGQLKYWKLRIAHYLKILGNCYEMELLNRSTLHQWLVDFLSKIESFEFYPMTLHILSIFWSGILGTTEEDTEIESSFLIIKLSEILLRKYHIISESKCMINDSKYIINDVQRNSKLKESVLLRLRQFISHIFHTQSLEAFIMPKQNWNIYKNYLYQILLQNVSDEETPKLKKKLKLISYRNESLRLGSLDVEPSRETSPFSTELTLDNVFSGNILNLKNVSPELLGVLDSGLSGSEWSLFIDQKITKMEQVIEIILWAINPSRKHRYDSCHLVAKILVLKINSQESFQEYSIEDVIWSLIFHFSKLSKLELQKIVWLPKLHQLLNVFIGYGIIKVPTYIRRLISSGVLYLPESENKNFHCKLLINLKISPIMKSQYNMVLKNVMEYAPHFYEKYNFDKLVSIFESLKPKLLSGDFERLEEYPGSIRIMCSEWYLSQICFNQGELQKVNNHKIIKTFQLFCINLGELHHFFGWAEYIVYHQLIDDLENLEVFTDILLYLDKAFLLLINDHILFMKTLLHSYMRDLRIKDKAAFELINFKSFWKFFVKNCANMIEMDSSLQNQIAEVFELERHRKDHFTKMPNETVSLYLEITGNKNTKFEEQNFPSVIQQNIKKVLHNPEDESNCRKLLLLCKASHASEYNKFLSIFVKRGDFTVHELLKLISLKLLSFEVIQKTSHFDLLCELVSQVSFNYGLNFENEKNAFVKRNFKQITLQLFSRPTFRDTLVRMLVEYGPNSNLSEKSAQVVSHILREEKNMSIIRDMLIYGMNIENEAIDNTIDLYRYLNFTNTWLFQILTEFNVKNSNAEDLSDFFSSIVGAIGYNSLLPKIFSNISDKKQVSTLLTVIERQFLARVLETEKSALVFLHIMMDTEIVLSRHLVNMSSLGMDSEVLELFKNTIATFAKMPNDTLKKYDENLNELLKIVIIHEKFILRHCFESIELRDHYMVDNFYTLFHNTGKDLKLKLLLYDLLTSLKSYILNETKDQALHSIKMPSVLNQLPKFAISSFLDSEGTEDEFLDKDEPSLIRLGICDKQAKTNSALKYFVFNKKSSQFDCIFKIEPFQYLVNYQEPLEGELNNTSLSLGLFDARLEKTNPS</sequence>
<comment type="function">
    <text evidence="1">Component of the SRB8-11 complex. The SRB8-11 complex is a regulatory module of the Mediator complex which is itself involved in regulation of basal and activated RNA polymerase II-dependent transcription. The SRB8-11 complex may be involved in the transcriptional repression of a subset of genes regulated by Mediator. It may inhibit the association of the Mediator complex with RNA polymerase II to form the holoenzyme complex (By similarity).</text>
</comment>
<comment type="subunit">
    <text evidence="1">Component of the SRB8-11 complex, which itself associates with the Mediator complex.</text>
</comment>
<comment type="subcellular location">
    <subcellularLocation>
        <location evidence="3">Nucleus</location>
    </subcellularLocation>
</comment>
<comment type="similarity">
    <text evidence="3">Belongs to the Mediator complex subunit 12 family.</text>
</comment>
<organism>
    <name type="scientific">Kluyveromyces lactis (strain ATCC 8585 / CBS 2359 / DSM 70799 / NBRC 1267 / NRRL Y-1140 / WM37)</name>
    <name type="common">Yeast</name>
    <name type="synonym">Candida sphaerica</name>
    <dbReference type="NCBI Taxonomy" id="284590"/>
    <lineage>
        <taxon>Eukaryota</taxon>
        <taxon>Fungi</taxon>
        <taxon>Dikarya</taxon>
        <taxon>Ascomycota</taxon>
        <taxon>Saccharomycotina</taxon>
        <taxon>Saccharomycetes</taxon>
        <taxon>Saccharomycetales</taxon>
        <taxon>Saccharomycetaceae</taxon>
        <taxon>Kluyveromyces</taxon>
    </lineage>
</organism>
<proteinExistence type="inferred from homology"/>
<accession>Q6CKZ5</accession>
<gene>
    <name type="primary">SRB8</name>
    <name type="synonym">MED12</name>
    <name type="ordered locus">KLLA0F06919g</name>
</gene>